<organism>
    <name type="scientific">Pinus pinaster</name>
    <name type="common">Maritime pine</name>
    <dbReference type="NCBI Taxonomy" id="71647"/>
    <lineage>
        <taxon>Eukaryota</taxon>
        <taxon>Viridiplantae</taxon>
        <taxon>Streptophyta</taxon>
        <taxon>Embryophyta</taxon>
        <taxon>Tracheophyta</taxon>
        <taxon>Spermatophyta</taxon>
        <taxon>Pinopsida</taxon>
        <taxon>Pinidae</taxon>
        <taxon>Conifers I</taxon>
        <taxon>Pinales</taxon>
        <taxon>Pinaceae</taxon>
        <taxon>Pinus</taxon>
        <taxon>Pinus subgen. Pinus</taxon>
    </lineage>
</organism>
<comment type="function">
    <text>Destroys radicals which are normally produced within the cells and which are toxic to biological systems.</text>
</comment>
<comment type="catalytic activity">
    <reaction>
        <text>2 superoxide + 2 H(+) = H2O2 + O2</text>
        <dbReference type="Rhea" id="RHEA:20696"/>
        <dbReference type="ChEBI" id="CHEBI:15378"/>
        <dbReference type="ChEBI" id="CHEBI:15379"/>
        <dbReference type="ChEBI" id="CHEBI:16240"/>
        <dbReference type="ChEBI" id="CHEBI:18421"/>
        <dbReference type="EC" id="1.15.1.1"/>
    </reaction>
</comment>
<comment type="cofactor">
    <cofactor evidence="1">
        <name>Cu cation</name>
        <dbReference type="ChEBI" id="CHEBI:23378"/>
    </cofactor>
    <text evidence="1">Binds 1 copper ion per subunit.</text>
</comment>
<comment type="cofactor">
    <cofactor evidence="1">
        <name>Zn(2+)</name>
        <dbReference type="ChEBI" id="CHEBI:29105"/>
    </cofactor>
    <text evidence="1">Binds 1 zinc ion per subunit.</text>
</comment>
<comment type="subunit">
    <text evidence="1">Homodimer.</text>
</comment>
<comment type="subcellular location">
    <subcellularLocation>
        <location>Plastid</location>
        <location>Chloroplast</location>
    </subcellularLocation>
</comment>
<comment type="induction">
    <text>By water stress.</text>
</comment>
<comment type="similarity">
    <text evidence="2">Belongs to the Cu-Zn superoxide dismutase family.</text>
</comment>
<dbReference type="EC" id="1.15.1.1"/>
<dbReference type="GO" id="GO:0009507">
    <property type="term" value="C:chloroplast"/>
    <property type="evidence" value="ECO:0007669"/>
    <property type="project" value="UniProtKB-SubCell"/>
</dbReference>
<dbReference type="GO" id="GO:0046872">
    <property type="term" value="F:metal ion binding"/>
    <property type="evidence" value="ECO:0007669"/>
    <property type="project" value="UniProtKB-KW"/>
</dbReference>
<dbReference type="GO" id="GO:0004784">
    <property type="term" value="F:superoxide dismutase activity"/>
    <property type="evidence" value="ECO:0007669"/>
    <property type="project" value="UniProtKB-EC"/>
</dbReference>
<proteinExistence type="evidence at protein level"/>
<feature type="chain" id="PRO_0000164179" description="Probable superoxide dismutase [Cu-Zn], chloroplastic">
    <location>
        <begin position="1" status="less than"/>
        <end position="15" status="greater than"/>
    </location>
</feature>
<feature type="non-terminal residue">
    <location>
        <position position="1"/>
    </location>
</feature>
<feature type="non-terminal residue">
    <location>
        <position position="15"/>
    </location>
</feature>
<keyword id="KW-0049">Antioxidant</keyword>
<keyword id="KW-0150">Chloroplast</keyword>
<keyword id="KW-0186">Copper</keyword>
<keyword id="KW-0903">Direct protein sequencing</keyword>
<keyword id="KW-0479">Metal-binding</keyword>
<keyword id="KW-0560">Oxidoreductase</keyword>
<keyword id="KW-0934">Plastid</keyword>
<keyword id="KW-0346">Stress response</keyword>
<keyword id="KW-0862">Zinc</keyword>
<protein>
    <recommendedName>
        <fullName>Probable superoxide dismutase [Cu-Zn], chloroplastic</fullName>
        <ecNumber>1.15.1.1</ecNumber>
    </recommendedName>
    <alternativeName>
        <fullName>Water stress-responsive protein 15</fullName>
    </alternativeName>
</protein>
<name>SODCP_PINPS</name>
<evidence type="ECO:0000250" key="1"/>
<evidence type="ECO:0000305" key="2"/>
<accession>P81082</accession>
<sequence length="15" mass="1381">HAGDLGNIVAGSDGV</sequence>
<reference key="1">
    <citation type="journal article" date="1998" name="Plant Mol. Biol.">
        <title>Water-deficit-responsive proteins in maritime pine.</title>
        <authorList>
            <person name="Costa P."/>
            <person name="Bahrman N."/>
            <person name="Frigerio J.-M."/>
            <person name="Kremer A."/>
            <person name="Plomion C."/>
        </authorList>
    </citation>
    <scope>PROTEIN SEQUENCE</scope>
    <source>
        <tissue>Needle</tissue>
    </source>
</reference>
<reference key="2">
    <citation type="journal article" date="1999" name="Electrophoresis">
        <title>Separation and characterization of needle and xylem maritime pine proteins.</title>
        <authorList>
            <person name="Costa P."/>
            <person name="Pionneau C."/>
            <person name="Bauw G."/>
            <person name="Dubos C."/>
            <person name="Bahrman N."/>
            <person name="Kremer A."/>
            <person name="Frigerio J.-M."/>
            <person name="Plomion C."/>
        </authorList>
    </citation>
    <scope>PROTEIN SEQUENCE</scope>
    <source>
        <tissue>Needle</tissue>
    </source>
</reference>